<dbReference type="EC" id="2.4.2.9" evidence="1"/>
<dbReference type="EMBL" id="AM408590">
    <property type="protein sequence ID" value="CAL71427.1"/>
    <property type="molecule type" value="Genomic_DNA"/>
</dbReference>
<dbReference type="RefSeq" id="WP_003407196.1">
    <property type="nucleotide sequence ID" value="NC_008769.1"/>
</dbReference>
<dbReference type="SMR" id="A1KIG8"/>
<dbReference type="KEGG" id="mbb:BCG_1440"/>
<dbReference type="HOGENOM" id="CLU_094234_2_1_11"/>
<dbReference type="Proteomes" id="UP000001472">
    <property type="component" value="Chromosome"/>
</dbReference>
<dbReference type="GO" id="GO:0004845">
    <property type="term" value="F:uracil phosphoribosyltransferase activity"/>
    <property type="evidence" value="ECO:0007669"/>
    <property type="project" value="UniProtKB-UniRule"/>
</dbReference>
<dbReference type="GO" id="GO:0006355">
    <property type="term" value="P:regulation of DNA-templated transcription"/>
    <property type="evidence" value="ECO:0007669"/>
    <property type="project" value="UniProtKB-UniRule"/>
</dbReference>
<dbReference type="CDD" id="cd06223">
    <property type="entry name" value="PRTases_typeI"/>
    <property type="match status" value="1"/>
</dbReference>
<dbReference type="FunFam" id="3.40.50.2020:FF:000020">
    <property type="entry name" value="Bifunctional protein PyrR"/>
    <property type="match status" value="1"/>
</dbReference>
<dbReference type="Gene3D" id="3.40.50.2020">
    <property type="match status" value="1"/>
</dbReference>
<dbReference type="HAMAP" id="MF_01219">
    <property type="entry name" value="PyrR"/>
    <property type="match status" value="1"/>
</dbReference>
<dbReference type="InterPro" id="IPR000836">
    <property type="entry name" value="PRibTrfase_dom"/>
</dbReference>
<dbReference type="InterPro" id="IPR029057">
    <property type="entry name" value="PRTase-like"/>
</dbReference>
<dbReference type="InterPro" id="IPR023050">
    <property type="entry name" value="PyrR"/>
</dbReference>
<dbReference type="InterPro" id="IPR050137">
    <property type="entry name" value="PyrR_bifunctional"/>
</dbReference>
<dbReference type="NCBIfam" id="NF003547">
    <property type="entry name" value="PRK05205.1-3"/>
    <property type="match status" value="1"/>
</dbReference>
<dbReference type="NCBIfam" id="NF003549">
    <property type="entry name" value="PRK05205.1-5"/>
    <property type="match status" value="1"/>
</dbReference>
<dbReference type="PANTHER" id="PTHR11608">
    <property type="entry name" value="BIFUNCTIONAL PROTEIN PYRR"/>
    <property type="match status" value="1"/>
</dbReference>
<dbReference type="PANTHER" id="PTHR11608:SF0">
    <property type="entry name" value="BIFUNCTIONAL PROTEIN PYRR"/>
    <property type="match status" value="1"/>
</dbReference>
<dbReference type="Pfam" id="PF00156">
    <property type="entry name" value="Pribosyltran"/>
    <property type="match status" value="1"/>
</dbReference>
<dbReference type="SUPFAM" id="SSF53271">
    <property type="entry name" value="PRTase-like"/>
    <property type="match status" value="1"/>
</dbReference>
<feature type="chain" id="PRO_1000053848" description="Bifunctional protein PyrR">
    <location>
        <begin position="1"/>
        <end position="193"/>
    </location>
</feature>
<feature type="short sequence motif" description="PRPP-binding" evidence="1">
    <location>
        <begin position="115"/>
        <end position="127"/>
    </location>
</feature>
<evidence type="ECO:0000255" key="1">
    <source>
        <dbReference type="HAMAP-Rule" id="MF_01219"/>
    </source>
</evidence>
<protein>
    <recommendedName>
        <fullName evidence="1">Bifunctional protein PyrR</fullName>
    </recommendedName>
    <domain>
        <recommendedName>
            <fullName evidence="1">Pyrimidine operon regulatory protein</fullName>
        </recommendedName>
    </domain>
    <domain>
        <recommendedName>
            <fullName evidence="1">Uracil phosphoribosyltransferase</fullName>
            <shortName evidence="1">UPRTase</shortName>
            <ecNumber evidence="1">2.4.2.9</ecNumber>
        </recommendedName>
    </domain>
</protein>
<sequence length="193" mass="20627">MGAAGDAAIGRESRELMSAADVGRTISRIAHQIIEKTALDDPVGPDAPRVVLLGIPTRGVTLANRLAGNITEYSGIHVGHGALDITLYRDDLMIKPPRPLASTSIPAGGIDDALVILVDDVLYSGRSVRSALDALRDVGRPRAVQLAVLVDRGHRELPLRADYVGKNVPTSRSESVHVRLREHDGRDGVVISR</sequence>
<gene>
    <name evidence="1" type="primary">pyrR</name>
    <name type="ordered locus">BCG_1440</name>
</gene>
<proteinExistence type="inferred from homology"/>
<name>PYRR_MYCBP</name>
<organism>
    <name type="scientific">Mycobacterium bovis (strain BCG / Pasteur 1173P2)</name>
    <dbReference type="NCBI Taxonomy" id="410289"/>
    <lineage>
        <taxon>Bacteria</taxon>
        <taxon>Bacillati</taxon>
        <taxon>Actinomycetota</taxon>
        <taxon>Actinomycetes</taxon>
        <taxon>Mycobacteriales</taxon>
        <taxon>Mycobacteriaceae</taxon>
        <taxon>Mycobacterium</taxon>
        <taxon>Mycobacterium tuberculosis complex</taxon>
    </lineage>
</organism>
<accession>A1KIG8</accession>
<keyword id="KW-0328">Glycosyltransferase</keyword>
<keyword id="KW-0804">Transcription</keyword>
<keyword id="KW-0805">Transcription regulation</keyword>
<keyword id="KW-0808">Transferase</keyword>
<comment type="function">
    <text evidence="1">Regulates the transcription of the pyrimidine nucleotide (pyr) operon in response to exogenous pyrimidines.</text>
</comment>
<comment type="function">
    <text evidence="1">Also displays a weak uracil phosphoribosyltransferase activity which is not physiologically significant.</text>
</comment>
<comment type="catalytic activity">
    <reaction evidence="1">
        <text>UMP + diphosphate = 5-phospho-alpha-D-ribose 1-diphosphate + uracil</text>
        <dbReference type="Rhea" id="RHEA:13017"/>
        <dbReference type="ChEBI" id="CHEBI:17568"/>
        <dbReference type="ChEBI" id="CHEBI:33019"/>
        <dbReference type="ChEBI" id="CHEBI:57865"/>
        <dbReference type="ChEBI" id="CHEBI:58017"/>
        <dbReference type="EC" id="2.4.2.9"/>
    </reaction>
</comment>
<comment type="similarity">
    <text evidence="1">Belongs to the purine/pyrimidine phosphoribosyltransferase family. PyrR subfamily.</text>
</comment>
<reference key="1">
    <citation type="journal article" date="2007" name="Proc. Natl. Acad. Sci. U.S.A.">
        <title>Genome plasticity of BCG and impact on vaccine efficacy.</title>
        <authorList>
            <person name="Brosch R."/>
            <person name="Gordon S.V."/>
            <person name="Garnier T."/>
            <person name="Eiglmeier K."/>
            <person name="Frigui W."/>
            <person name="Valenti P."/>
            <person name="Dos Santos S."/>
            <person name="Duthoy S."/>
            <person name="Lacroix C."/>
            <person name="Garcia-Pelayo C."/>
            <person name="Inwald J.K."/>
            <person name="Golby P."/>
            <person name="Garcia J.N."/>
            <person name="Hewinson R.G."/>
            <person name="Behr M.A."/>
            <person name="Quail M.A."/>
            <person name="Churcher C."/>
            <person name="Barrell B.G."/>
            <person name="Parkhill J."/>
            <person name="Cole S.T."/>
        </authorList>
    </citation>
    <scope>NUCLEOTIDE SEQUENCE [LARGE SCALE GENOMIC DNA]</scope>
    <source>
        <strain>BCG / Pasteur 1173P2</strain>
    </source>
</reference>